<evidence type="ECO:0000255" key="1">
    <source>
        <dbReference type="HAMAP-Rule" id="MF_01523"/>
    </source>
</evidence>
<accession>A9KV34</accession>
<organism>
    <name type="scientific">Shewanella baltica (strain OS195)</name>
    <dbReference type="NCBI Taxonomy" id="399599"/>
    <lineage>
        <taxon>Bacteria</taxon>
        <taxon>Pseudomonadati</taxon>
        <taxon>Pseudomonadota</taxon>
        <taxon>Gammaproteobacteria</taxon>
        <taxon>Alteromonadales</taxon>
        <taxon>Shewanellaceae</taxon>
        <taxon>Shewanella</taxon>
    </lineage>
</organism>
<comment type="function">
    <text evidence="1">Specifically methylates the guanosine in position 1516 of 16S rRNA.</text>
</comment>
<comment type="catalytic activity">
    <reaction evidence="1">
        <text>guanosine(1516) in 16S rRNA + S-adenosyl-L-methionine = N(2)-methylguanosine(1516) in 16S rRNA + S-adenosyl-L-homocysteine + H(+)</text>
        <dbReference type="Rhea" id="RHEA:43220"/>
        <dbReference type="Rhea" id="RHEA-COMP:10412"/>
        <dbReference type="Rhea" id="RHEA-COMP:10413"/>
        <dbReference type="ChEBI" id="CHEBI:15378"/>
        <dbReference type="ChEBI" id="CHEBI:57856"/>
        <dbReference type="ChEBI" id="CHEBI:59789"/>
        <dbReference type="ChEBI" id="CHEBI:74269"/>
        <dbReference type="ChEBI" id="CHEBI:74481"/>
        <dbReference type="EC" id="2.1.1.242"/>
    </reaction>
</comment>
<comment type="subcellular location">
    <subcellularLocation>
        <location evidence="1">Cytoplasm</location>
    </subcellularLocation>
</comment>
<comment type="similarity">
    <text evidence="1">Belongs to the methyltransferase superfamily. RsmJ family.</text>
</comment>
<dbReference type="EC" id="2.1.1.242" evidence="1"/>
<dbReference type="EMBL" id="CP000891">
    <property type="protein sequence ID" value="ABX51533.1"/>
    <property type="molecule type" value="Genomic_DNA"/>
</dbReference>
<dbReference type="RefSeq" id="WP_006079459.1">
    <property type="nucleotide sequence ID" value="NC_009997.1"/>
</dbReference>
<dbReference type="SMR" id="A9KV34"/>
<dbReference type="KEGG" id="sbn:Sbal195_4375"/>
<dbReference type="HOGENOM" id="CLU_076324_0_0_6"/>
<dbReference type="Proteomes" id="UP000000770">
    <property type="component" value="Chromosome"/>
</dbReference>
<dbReference type="GO" id="GO:0005737">
    <property type="term" value="C:cytoplasm"/>
    <property type="evidence" value="ECO:0007669"/>
    <property type="project" value="UniProtKB-SubCell"/>
</dbReference>
<dbReference type="GO" id="GO:0008990">
    <property type="term" value="F:rRNA (guanine-N2-)-methyltransferase activity"/>
    <property type="evidence" value="ECO:0007669"/>
    <property type="project" value="UniProtKB-UniRule"/>
</dbReference>
<dbReference type="CDD" id="cd02440">
    <property type="entry name" value="AdoMet_MTases"/>
    <property type="match status" value="1"/>
</dbReference>
<dbReference type="Gene3D" id="3.40.50.150">
    <property type="entry name" value="Vaccinia Virus protein VP39"/>
    <property type="match status" value="1"/>
</dbReference>
<dbReference type="Gene3D" id="3.40.1630.10">
    <property type="entry name" value="YhiQ-like domain"/>
    <property type="match status" value="1"/>
</dbReference>
<dbReference type="HAMAP" id="MF_01523">
    <property type="entry name" value="16SrRNA_methyltr_J"/>
    <property type="match status" value="1"/>
</dbReference>
<dbReference type="InterPro" id="IPR007536">
    <property type="entry name" value="16SrRNA_methylTrfase_J"/>
</dbReference>
<dbReference type="InterPro" id="IPR029063">
    <property type="entry name" value="SAM-dependent_MTases_sf"/>
</dbReference>
<dbReference type="PANTHER" id="PTHR36112">
    <property type="entry name" value="RIBOSOMAL RNA SMALL SUBUNIT METHYLTRANSFERASE J"/>
    <property type="match status" value="1"/>
</dbReference>
<dbReference type="PANTHER" id="PTHR36112:SF1">
    <property type="entry name" value="RIBOSOMAL RNA SMALL SUBUNIT METHYLTRANSFERASE J"/>
    <property type="match status" value="1"/>
</dbReference>
<dbReference type="Pfam" id="PF04445">
    <property type="entry name" value="SAM_MT"/>
    <property type="match status" value="1"/>
</dbReference>
<dbReference type="SUPFAM" id="SSF53335">
    <property type="entry name" value="S-adenosyl-L-methionine-dependent methyltransferases"/>
    <property type="match status" value="1"/>
</dbReference>
<sequence length="248" mass="27482">MTPIFFNQQYPTLVDICARWQLVYDANATFELRFESDTLSLHKRDEPKLDGIVVDFVTGAVAHRRKFGGGRGQSIAKAVGLKQGVMPSVVDGTAGLGRDAFVLASLGCTVTMVERHPVVAALLEDGLRRAYQDAEIGDWMRERMRLFHGSSLEALSKLAQEVDVVYLDPMYPHRDKSALVKKEMRVFQSLVGADLDADGLLAPALALATKRVVVKRPDYAEDLDGVKPNTVIETKKNRFDVYVKAAMK</sequence>
<keyword id="KW-0963">Cytoplasm</keyword>
<keyword id="KW-0489">Methyltransferase</keyword>
<keyword id="KW-0698">rRNA processing</keyword>
<keyword id="KW-0949">S-adenosyl-L-methionine</keyword>
<keyword id="KW-0808">Transferase</keyword>
<reference key="1">
    <citation type="submission" date="2007-11" db="EMBL/GenBank/DDBJ databases">
        <title>Complete sequence of chromosome of Shewanella baltica OS195.</title>
        <authorList>
            <consortium name="US DOE Joint Genome Institute"/>
            <person name="Copeland A."/>
            <person name="Lucas S."/>
            <person name="Lapidus A."/>
            <person name="Barry K."/>
            <person name="Glavina del Rio T."/>
            <person name="Dalin E."/>
            <person name="Tice H."/>
            <person name="Pitluck S."/>
            <person name="Chain P."/>
            <person name="Malfatti S."/>
            <person name="Shin M."/>
            <person name="Vergez L."/>
            <person name="Schmutz J."/>
            <person name="Larimer F."/>
            <person name="Land M."/>
            <person name="Hauser L."/>
            <person name="Kyrpides N."/>
            <person name="Kim E."/>
            <person name="Brettar I."/>
            <person name="Rodrigues J."/>
            <person name="Konstantinidis K."/>
            <person name="Klappenbach J."/>
            <person name="Hofle M."/>
            <person name="Tiedje J."/>
            <person name="Richardson P."/>
        </authorList>
    </citation>
    <scope>NUCLEOTIDE SEQUENCE [LARGE SCALE GENOMIC DNA]</scope>
    <source>
        <strain>OS195</strain>
    </source>
</reference>
<protein>
    <recommendedName>
        <fullName evidence="1">Ribosomal RNA small subunit methyltransferase J</fullName>
        <ecNumber evidence="1">2.1.1.242</ecNumber>
    </recommendedName>
    <alternativeName>
        <fullName evidence="1">16S rRNA m2G1516 methyltransferase</fullName>
    </alternativeName>
    <alternativeName>
        <fullName evidence="1">rRNA (guanine-N(2)-)-methyltransferase</fullName>
    </alternativeName>
</protein>
<name>RSMJ_SHEB9</name>
<proteinExistence type="inferred from homology"/>
<feature type="chain" id="PRO_1000087570" description="Ribosomal RNA small subunit methyltransferase J">
    <location>
        <begin position="1"/>
        <end position="248"/>
    </location>
</feature>
<feature type="binding site" evidence="1">
    <location>
        <begin position="98"/>
        <end position="99"/>
    </location>
    <ligand>
        <name>S-adenosyl-L-methionine</name>
        <dbReference type="ChEBI" id="CHEBI:59789"/>
    </ligand>
</feature>
<feature type="binding site" evidence="1">
    <location>
        <begin position="114"/>
        <end position="115"/>
    </location>
    <ligand>
        <name>S-adenosyl-L-methionine</name>
        <dbReference type="ChEBI" id="CHEBI:59789"/>
    </ligand>
</feature>
<feature type="binding site" evidence="1">
    <location>
        <begin position="150"/>
        <end position="151"/>
    </location>
    <ligand>
        <name>S-adenosyl-L-methionine</name>
        <dbReference type="ChEBI" id="CHEBI:59789"/>
    </ligand>
</feature>
<feature type="binding site" evidence="1">
    <location>
        <position position="168"/>
    </location>
    <ligand>
        <name>S-adenosyl-L-methionine</name>
        <dbReference type="ChEBI" id="CHEBI:59789"/>
    </ligand>
</feature>
<gene>
    <name evidence="1" type="primary">rsmJ</name>
    <name type="ordered locus">Sbal195_4375</name>
</gene>